<accession>P0C2K2</accession>
<comment type="function">
    <text evidence="2 4 7">Dermonecrotic toxins cleave the phosphodiester linkage between the phosphate and headgroup of certain phospholipids (sphingolipid and lysolipid substrates), forming an alcohol (often choline) and a cyclic phosphate (By similarity). This toxin acts on sphingomyelin (SM) (By similarity). It may also act on ceramide phosphoethanolamine (CPE), lysophosphatidylcholine (LPC) and lysophosphatidylethanolamine (LPE), but not on lysophosphatidylserine (LPS), and lysophosphatidylglycerol (LPG) (By similarity). It acts by transphosphatidylation, releasing exclusively cyclic phosphate products as second products (By similarity). In vivo, intradermal injection induces dermonecrosis (PubMed:8819009). Induces, hemolysis, vascular permeability, edema, inflammatory response, and platelet aggregation (By similarity).</text>
</comment>
<comment type="catalytic activity">
    <reaction evidence="2">
        <text>an N-(acyl)-sphingosylphosphocholine = an N-(acyl)-sphingosyl-1,3-cyclic phosphate + choline</text>
        <dbReference type="Rhea" id="RHEA:60652"/>
        <dbReference type="ChEBI" id="CHEBI:15354"/>
        <dbReference type="ChEBI" id="CHEBI:64583"/>
        <dbReference type="ChEBI" id="CHEBI:143892"/>
    </reaction>
</comment>
<comment type="catalytic activity">
    <reaction evidence="2">
        <text>an N-(acyl)-sphingosylphosphoethanolamine = an N-(acyl)-sphingosyl-1,3-cyclic phosphate + ethanolamine</text>
        <dbReference type="Rhea" id="RHEA:60648"/>
        <dbReference type="ChEBI" id="CHEBI:57603"/>
        <dbReference type="ChEBI" id="CHEBI:143891"/>
        <dbReference type="ChEBI" id="CHEBI:143892"/>
    </reaction>
</comment>
<comment type="catalytic activity">
    <reaction evidence="2">
        <text>a 1-acyl-sn-glycero-3-phosphocholine = a 1-acyl-sn-glycero-2,3-cyclic phosphate + choline</text>
        <dbReference type="Rhea" id="RHEA:60700"/>
        <dbReference type="ChEBI" id="CHEBI:15354"/>
        <dbReference type="ChEBI" id="CHEBI:58168"/>
        <dbReference type="ChEBI" id="CHEBI:143947"/>
    </reaction>
</comment>
<comment type="catalytic activity">
    <reaction evidence="2">
        <text>a 1-acyl-sn-glycero-3-phosphoethanolamine = a 1-acyl-sn-glycero-2,3-cyclic phosphate + ethanolamine</text>
        <dbReference type="Rhea" id="RHEA:60704"/>
        <dbReference type="ChEBI" id="CHEBI:57603"/>
        <dbReference type="ChEBI" id="CHEBI:64381"/>
        <dbReference type="ChEBI" id="CHEBI:143947"/>
    </reaction>
</comment>
<comment type="cofactor">
    <cofactor evidence="6">
        <name>Mg(2+)</name>
        <dbReference type="ChEBI" id="CHEBI:18420"/>
    </cofactor>
    <text evidence="6">Binds 1 Mg(2+) ion per subunit.</text>
</comment>
<comment type="subcellular location">
    <subcellularLocation>
        <location evidence="7">Secreted</location>
    </subcellularLocation>
</comment>
<comment type="tissue specificity">
    <text evidence="9">Expressed by the venom gland.</text>
</comment>
<comment type="PTM">
    <text evidence="4">Contains 2 disulfide bonds.</text>
</comment>
<comment type="similarity">
    <text evidence="8">Belongs to the arthropod phospholipase D family. Class II subfamily.</text>
</comment>
<comment type="caution">
    <text evidence="2 3 5">The most common activity assay for dermonecrotic toxins detects enzymatic activity by monitoring choline release from substrate. Liberation of choline from sphingomyelin (SM) or lysophosphatidylcholine (LPC) is commonly assumed to result from substrate hydrolysis, giving either ceramide-1-phosphate (C1P) or lysophosphatidic acid (LPA), respectively, as a second product. However, two studies from Lajoie and colleagues (2013 and 2015) report the observation of exclusive formation of cyclic phosphate products as second products, resulting from intramolecular transphosphatidylation. Cyclic phosphates have vastly different biological properties from their monoester counterparts, and they may be relevant to the pathology of brown spider envenomation.</text>
</comment>
<protein>
    <recommendedName>
        <fullName>Dermonecrotic toxin LgSicTox-alphaI-1</fullName>
        <ecNumber evidence="5">4.6.1.-</ecNumber>
    </recommendedName>
    <alternativeName>
        <fullName>Phospholipase D</fullName>
        <shortName>PLD</shortName>
    </alternativeName>
    <alternativeName>
        <fullName>Sphingomyelin phosphodiesterase D 2</fullName>
        <shortName>SMD 2</shortName>
        <shortName>SMase D 2</shortName>
        <shortName>Sphingomyelinase D 2</shortName>
    </alternativeName>
</protein>
<keyword id="KW-0204">Cytolysis</keyword>
<keyword id="KW-1061">Dermonecrotic toxin</keyword>
<keyword id="KW-0903">Direct protein sequencing</keyword>
<keyword id="KW-1015">Disulfide bond</keyword>
<keyword id="KW-0354">Hemolysis</keyword>
<keyword id="KW-0442">Lipid degradation</keyword>
<keyword id="KW-0443">Lipid metabolism</keyword>
<keyword id="KW-0456">Lyase</keyword>
<keyword id="KW-0460">Magnesium</keyword>
<keyword id="KW-0479">Metal-binding</keyword>
<keyword id="KW-0964">Secreted</keyword>
<keyword id="KW-0800">Toxin</keyword>
<sequence>ADNKRPIWVMGGMVNSLAQIKEFVGLGLDNSEKDNKWYKQ</sequence>
<dbReference type="EC" id="4.6.1.-" evidence="5"/>
<dbReference type="SMR" id="P0C2K2"/>
<dbReference type="ArachnoServer" id="AS000137">
    <property type="toxin name" value="Sphingomyelinase D (LgSicTox1) (N-terminal fragment)"/>
</dbReference>
<dbReference type="GO" id="GO:0005576">
    <property type="term" value="C:extracellular region"/>
    <property type="evidence" value="ECO:0007669"/>
    <property type="project" value="UniProtKB-SubCell"/>
</dbReference>
<dbReference type="GO" id="GO:0016829">
    <property type="term" value="F:lyase activity"/>
    <property type="evidence" value="ECO:0007669"/>
    <property type="project" value="UniProtKB-KW"/>
</dbReference>
<dbReference type="GO" id="GO:0046872">
    <property type="term" value="F:metal ion binding"/>
    <property type="evidence" value="ECO:0007669"/>
    <property type="project" value="UniProtKB-KW"/>
</dbReference>
<dbReference type="GO" id="GO:0008081">
    <property type="term" value="F:phosphoric diester hydrolase activity"/>
    <property type="evidence" value="ECO:0007669"/>
    <property type="project" value="InterPro"/>
</dbReference>
<dbReference type="GO" id="GO:0090729">
    <property type="term" value="F:toxin activity"/>
    <property type="evidence" value="ECO:0007669"/>
    <property type="project" value="UniProtKB-KW"/>
</dbReference>
<dbReference type="GO" id="GO:0031640">
    <property type="term" value="P:killing of cells of another organism"/>
    <property type="evidence" value="ECO:0007669"/>
    <property type="project" value="UniProtKB-KW"/>
</dbReference>
<dbReference type="GO" id="GO:0016042">
    <property type="term" value="P:lipid catabolic process"/>
    <property type="evidence" value="ECO:0007669"/>
    <property type="project" value="UniProtKB-KW"/>
</dbReference>
<dbReference type="Gene3D" id="3.20.20.190">
    <property type="entry name" value="Phosphatidylinositol (PI) phosphodiesterase"/>
    <property type="match status" value="1"/>
</dbReference>
<dbReference type="InterPro" id="IPR017946">
    <property type="entry name" value="PLC-like_Pdiesterase_TIM-brl"/>
</dbReference>
<proteinExistence type="evidence at protein level"/>
<feature type="chain" id="PRO_0000279559" description="Dermonecrotic toxin LgSicTox-alphaI-1">
    <location>
        <begin position="1"/>
        <end position="40" status="greater than"/>
    </location>
</feature>
<feature type="binding site" evidence="6">
    <location>
        <position position="32"/>
    </location>
    <ligand>
        <name>Mg(2+)</name>
        <dbReference type="ChEBI" id="CHEBI:18420"/>
    </ligand>
</feature>
<feature type="binding site" evidence="1">
    <location>
        <position position="34"/>
    </location>
    <ligand>
        <name>Mg(2+)</name>
        <dbReference type="ChEBI" id="CHEBI:18420"/>
    </ligand>
</feature>
<feature type="non-terminal residue">
    <location>
        <position position="40"/>
    </location>
</feature>
<evidence type="ECO:0000250" key="1"/>
<evidence type="ECO:0000250" key="2">
    <source>
        <dbReference type="UniProtKB" id="A0A0D4WTV1"/>
    </source>
</evidence>
<evidence type="ECO:0000250" key="3">
    <source>
        <dbReference type="UniProtKB" id="A0A0D4WV12"/>
    </source>
</evidence>
<evidence type="ECO:0000250" key="4">
    <source>
        <dbReference type="UniProtKB" id="P0CE80"/>
    </source>
</evidence>
<evidence type="ECO:0000250" key="5">
    <source>
        <dbReference type="UniProtKB" id="Q4ZFU2"/>
    </source>
</evidence>
<evidence type="ECO:0000250" key="6">
    <source>
        <dbReference type="UniProtKB" id="Q8I914"/>
    </source>
</evidence>
<evidence type="ECO:0000269" key="7">
    <source>
    </source>
</evidence>
<evidence type="ECO:0000305" key="8"/>
<evidence type="ECO:0000305" key="9">
    <source>
    </source>
</evidence>
<name>A1X1_LOXGA</name>
<organism>
    <name type="scientific">Loxosceles gaucho</name>
    <name type="common">Spider</name>
    <dbReference type="NCBI Taxonomy" id="58216"/>
    <lineage>
        <taxon>Eukaryota</taxon>
        <taxon>Metazoa</taxon>
        <taxon>Ecdysozoa</taxon>
        <taxon>Arthropoda</taxon>
        <taxon>Chelicerata</taxon>
        <taxon>Arachnida</taxon>
        <taxon>Araneae</taxon>
        <taxon>Araneomorphae</taxon>
        <taxon>Haplogynae</taxon>
        <taxon>Scytodoidea</taxon>
        <taxon>Sicariidae</taxon>
        <taxon>Loxosceles</taxon>
    </lineage>
</organism>
<reference key="1">
    <citation type="journal article" date="1996" name="J. Protein Chem.">
        <title>Compared chemical properties of dermonecrotic and lethal toxins from spiders of the genus Loxosceles (Araneae).</title>
        <authorList>
            <person name="Barbaro K.C."/>
            <person name="Sousa M.V."/>
            <person name="Morhy L."/>
            <person name="Eickstedt V.R."/>
            <person name="Mota I."/>
        </authorList>
    </citation>
    <scope>PROTEIN SEQUENCE</scope>
    <scope>SUBCELLULAR LOCATION</scope>
    <scope>FUNCTION</scope>
    <source>
        <tissue>Venom</tissue>
    </source>
</reference>